<name>AMPPA_THEKO</name>
<protein>
    <recommendedName>
        <fullName evidence="1">AMP phosphorylase</fullName>
        <shortName evidence="1">AMPpase</shortName>
        <ecNumber evidence="1 2 3">2.4.2.57</ecNumber>
    </recommendedName>
    <alternativeName>
        <fullName evidence="1">Nucleoside monophosphate phosphorylase</fullName>
        <shortName evidence="1">NMP phosphorylase</shortName>
    </alternativeName>
</protein>
<organism>
    <name type="scientific">Thermococcus kodakarensis (strain ATCC BAA-918 / JCM 12380 / KOD1)</name>
    <name type="common">Pyrococcus kodakaraensis (strain KOD1)</name>
    <dbReference type="NCBI Taxonomy" id="69014"/>
    <lineage>
        <taxon>Archaea</taxon>
        <taxon>Methanobacteriati</taxon>
        <taxon>Methanobacteriota</taxon>
        <taxon>Thermococci</taxon>
        <taxon>Thermococcales</taxon>
        <taxon>Thermococcaceae</taxon>
        <taxon>Thermococcus</taxon>
    </lineage>
</organism>
<gene>
    <name evidence="5" type="primary">deoA</name>
    <name type="ordered locus">TK0352</name>
</gene>
<proteinExistence type="evidence at protein level"/>
<sequence>MKAKIRILDMFSGRYTVLINEEDAKEAKLHPDDLVKIEAGKKAVYGSVALSNLVGKGEVGISRDVLDLHNFSEGETVSVIPAGTPESVRYIKKKMHGEKLRKVEIEAIVRDIVDRKLRDIEISSFVTALEINGLDMDEIAALTIAMAETGDMLDIDRKPIMDVHSIGGVPGNKTNILVVPIVAAAGLTIPKTSSRAITSAAGTADVVEVFADVSFSLDEIKRIVEKVGACLVWGGALNLAPADDITIKAERALSIDPTGLMLASIMSKKYAMGSQYVLIDIPTGKGVKVETVEEARSLARDFIELGKRLGQYVEVAITYGGQPIGHTVGPALEAREALSALMTGKGPGSLIEKATGLAGILLEMGGVAPAGTGKKMAKEILESGKAWEKMKEIIEAQGGDPNIKPEEIPIGDKTYTFTAATSGYVTAIDNRAITAIARAAGAPEDKGAGIELYVKVGEKVKEGDPLFTIHAEHEARLDQAIVLARRTEPIRIEGMVLQRIGNI</sequence>
<accession>Q5JCX3</accession>
<evidence type="ECO:0000255" key="1">
    <source>
        <dbReference type="HAMAP-Rule" id="MF_02132"/>
    </source>
</evidence>
<evidence type="ECO:0000269" key="2">
    <source>
    </source>
</evidence>
<evidence type="ECO:0000269" key="3">
    <source>
    </source>
</evidence>
<evidence type="ECO:0000269" key="4">
    <source>
    </source>
</evidence>
<evidence type="ECO:0000303" key="5">
    <source>
    </source>
</evidence>
<evidence type="ECO:0000305" key="6">
    <source>
    </source>
</evidence>
<evidence type="ECO:0007829" key="7">
    <source>
        <dbReference type="PDB" id="4GA5"/>
    </source>
</evidence>
<evidence type="ECO:0007829" key="8">
    <source>
        <dbReference type="PDB" id="4GA6"/>
    </source>
</evidence>
<comment type="function">
    <text evidence="2 3">Catalyzes the conversion of AMP and phosphate to adenine and ribose 1,5-bisphosphate (R15P). Exhibits phosphorylase activity toward CMP, dCMP and UMP in addition to AMP. Functions in an archaeal AMP degradation pathway, together with R15P isomerase and RubisCO.</text>
</comment>
<comment type="catalytic activity">
    <reaction evidence="2 3">
        <text>AMP + phosphate = alpha-D-ribose 1,5-bisphosphate + adenine</text>
        <dbReference type="Rhea" id="RHEA:36975"/>
        <dbReference type="ChEBI" id="CHEBI:16708"/>
        <dbReference type="ChEBI" id="CHEBI:43474"/>
        <dbReference type="ChEBI" id="CHEBI:68688"/>
        <dbReference type="ChEBI" id="CHEBI:456215"/>
        <dbReference type="EC" id="2.4.2.57"/>
    </reaction>
</comment>
<comment type="catalytic activity">
    <reaction evidence="3">
        <text>CMP + phosphate = cytosine + alpha-D-ribose 1,5-bisphosphate</text>
        <dbReference type="Rhea" id="RHEA:36987"/>
        <dbReference type="ChEBI" id="CHEBI:16040"/>
        <dbReference type="ChEBI" id="CHEBI:43474"/>
        <dbReference type="ChEBI" id="CHEBI:60377"/>
        <dbReference type="ChEBI" id="CHEBI:68688"/>
        <dbReference type="EC" id="2.4.2.57"/>
    </reaction>
</comment>
<comment type="catalytic activity">
    <reaction evidence="3">
        <text>UMP + phosphate = alpha-D-ribose 1,5-bisphosphate + uracil</text>
        <dbReference type="Rhea" id="RHEA:36991"/>
        <dbReference type="ChEBI" id="CHEBI:17568"/>
        <dbReference type="ChEBI" id="CHEBI:43474"/>
        <dbReference type="ChEBI" id="CHEBI:57865"/>
        <dbReference type="ChEBI" id="CHEBI:68688"/>
        <dbReference type="EC" id="2.4.2.57"/>
    </reaction>
</comment>
<comment type="activity regulation">
    <text evidence="3">AMP phosphorolysis is allosterically regulated by the substrate AMP.</text>
</comment>
<comment type="biophysicochemical properties">
    <kinetics>
        <KM evidence="3">6.2 mM for CMP (in the presence of AMP, at 85 degrees Celsius)</KM>
        <KM evidence="3">4.4 mM for UMP (in the presence of AMP, at 85 degrees Celsius)</KM>
        <KM evidence="3">18.5 mM for GMP (in the presence of AMP, at 85 degrees Celsius)</KM>
        <KM evidence="3">2.8 mM for phosphate (in the presence of AMP, at 85 degrees Celsius)</KM>
        <text evidence="3">kcat is 39.1 sec(-1), 15.0 sec(-1), 10.5 sec(-1) and 2.7 sec(-1), with CMP, AMP, UMP, and GMP as substrate, respectively (at 85 degrees Celsius). KM for AMP was not determined because the reaction does not follow Michaelis-Menten kinetics.</text>
    </kinetics>
</comment>
<comment type="subunit">
    <text evidence="4">Forms an exceptionally large macromolecular structure (&gt;40-mers) in solution.</text>
</comment>
<comment type="induction">
    <text evidence="3">Constitutively expressed (at protein level). Does not respond to the addition of nucleosides.</text>
</comment>
<comment type="domain">
    <text evidence="4">The N-terminal domain (residues 1-84), characteristic of archaeal AMPpases, is essential for enzymatic activity, participating in multimerization as well as domain closure of the active site upon substrate binding. Harbors two dimer interfaces within a single molecule: one by the central domain and the other by the C-terminal domain; these two interactions can continuously occur in a repetitive manner, leading to multimerization.</text>
</comment>
<comment type="similarity">
    <text evidence="1">Belongs to the thymidine/pyrimidine-nucleoside phosphorylase family. Type 2 subfamily.</text>
</comment>
<dbReference type="EC" id="2.4.2.57" evidence="1 2 3"/>
<dbReference type="EMBL" id="AP006878">
    <property type="protein sequence ID" value="BAD84541.1"/>
    <property type="molecule type" value="Genomic_DNA"/>
</dbReference>
<dbReference type="RefSeq" id="WP_011249307.1">
    <property type="nucleotide sequence ID" value="NC_006624.1"/>
</dbReference>
<dbReference type="PDB" id="4GA4">
    <property type="method" value="X-ray"/>
    <property type="resolution" value="3.51 A"/>
    <property type="chains" value="A/B=85-503"/>
</dbReference>
<dbReference type="PDB" id="4GA5">
    <property type="method" value="X-ray"/>
    <property type="resolution" value="3.25 A"/>
    <property type="chains" value="A/B/C/D/E/F/G/H=1-493"/>
</dbReference>
<dbReference type="PDB" id="4GA6">
    <property type="method" value="X-ray"/>
    <property type="resolution" value="2.21 A"/>
    <property type="chains" value="A/B=1-493"/>
</dbReference>
<dbReference type="PDBsum" id="4GA4"/>
<dbReference type="PDBsum" id="4GA5"/>
<dbReference type="PDBsum" id="4GA6"/>
<dbReference type="SMR" id="Q5JCX3"/>
<dbReference type="FunCoup" id="Q5JCX3">
    <property type="interactions" value="22"/>
</dbReference>
<dbReference type="STRING" id="69014.TK0352"/>
<dbReference type="EnsemblBacteria" id="BAD84541">
    <property type="protein sequence ID" value="BAD84541"/>
    <property type="gene ID" value="TK0352"/>
</dbReference>
<dbReference type="GeneID" id="78446857"/>
<dbReference type="KEGG" id="tko:TK0352"/>
<dbReference type="PATRIC" id="fig|69014.16.peg.349"/>
<dbReference type="eggNOG" id="arCOG02013">
    <property type="taxonomic scope" value="Archaea"/>
</dbReference>
<dbReference type="HOGENOM" id="CLU_025040_6_0_2"/>
<dbReference type="InParanoid" id="Q5JCX3"/>
<dbReference type="OrthoDB" id="9827at2157"/>
<dbReference type="PhylomeDB" id="Q5JCX3"/>
<dbReference type="BioCyc" id="MetaCyc:MONOMER-13274"/>
<dbReference type="BRENDA" id="2.4.2.57">
    <property type="organism ID" value="5246"/>
</dbReference>
<dbReference type="EvolutionaryTrace" id="Q5JCX3"/>
<dbReference type="Proteomes" id="UP000000536">
    <property type="component" value="Chromosome"/>
</dbReference>
<dbReference type="GO" id="GO:0005829">
    <property type="term" value="C:cytosol"/>
    <property type="evidence" value="ECO:0000318"/>
    <property type="project" value="GO_Central"/>
</dbReference>
<dbReference type="GO" id="GO:0004645">
    <property type="term" value="F:1,4-alpha-oligoglucan phosphorylase activity"/>
    <property type="evidence" value="ECO:0007669"/>
    <property type="project" value="InterPro"/>
</dbReference>
<dbReference type="GO" id="GO:0016208">
    <property type="term" value="F:AMP binding"/>
    <property type="evidence" value="ECO:0000314"/>
    <property type="project" value="UniProtKB"/>
</dbReference>
<dbReference type="GO" id="GO:0016763">
    <property type="term" value="F:pentosyltransferase activity"/>
    <property type="evidence" value="ECO:0000314"/>
    <property type="project" value="UniProtKB"/>
</dbReference>
<dbReference type="GO" id="GO:0042301">
    <property type="term" value="F:phosphate ion binding"/>
    <property type="evidence" value="ECO:0000314"/>
    <property type="project" value="UniProtKB"/>
</dbReference>
<dbReference type="GO" id="GO:0006196">
    <property type="term" value="P:AMP catabolic process"/>
    <property type="evidence" value="ECO:0000314"/>
    <property type="project" value="UniProtKB"/>
</dbReference>
<dbReference type="GO" id="GO:0046125">
    <property type="term" value="P:pyrimidine deoxyribonucleoside metabolic process"/>
    <property type="evidence" value="ECO:0007669"/>
    <property type="project" value="InterPro"/>
</dbReference>
<dbReference type="GO" id="GO:0006206">
    <property type="term" value="P:pyrimidine nucleobase metabolic process"/>
    <property type="evidence" value="ECO:0007669"/>
    <property type="project" value="InterPro"/>
</dbReference>
<dbReference type="FunFam" id="2.40.40.20:FF:000007">
    <property type="entry name" value="AAA family ATPase"/>
    <property type="match status" value="1"/>
</dbReference>
<dbReference type="FunFam" id="3.90.1170.30:FF:000004">
    <property type="entry name" value="AMP phosphorylase"/>
    <property type="match status" value="1"/>
</dbReference>
<dbReference type="Gene3D" id="1.20.970.50">
    <property type="match status" value="1"/>
</dbReference>
<dbReference type="Gene3D" id="2.40.40.20">
    <property type="match status" value="1"/>
</dbReference>
<dbReference type="Gene3D" id="3.40.1030.10">
    <property type="entry name" value="Nucleoside phosphorylase/phosphoribosyltransferase catalytic domain"/>
    <property type="match status" value="1"/>
</dbReference>
<dbReference type="Gene3D" id="3.90.1170.30">
    <property type="entry name" value="Pyrimidine nucleoside phosphorylase-like, C-terminal domain"/>
    <property type="match status" value="1"/>
</dbReference>
<dbReference type="HAMAP" id="MF_02132">
    <property type="entry name" value="AMP_phosphorylase"/>
    <property type="match status" value="1"/>
</dbReference>
<dbReference type="InterPro" id="IPR017713">
    <property type="entry name" value="AMP_phosphorylase"/>
</dbReference>
<dbReference type="InterPro" id="IPR000312">
    <property type="entry name" value="Glycosyl_Trfase_fam3"/>
</dbReference>
<dbReference type="InterPro" id="IPR017459">
    <property type="entry name" value="Glycosyl_Trfase_fam3_N_dom"/>
</dbReference>
<dbReference type="InterPro" id="IPR036320">
    <property type="entry name" value="Glycosyl_Trfase_fam3_N_dom_sf"/>
</dbReference>
<dbReference type="InterPro" id="IPR035902">
    <property type="entry name" value="Nuc_phospho_transferase"/>
</dbReference>
<dbReference type="InterPro" id="IPR036566">
    <property type="entry name" value="PYNP-like_C_sf"/>
</dbReference>
<dbReference type="InterPro" id="IPR013102">
    <property type="entry name" value="PYNP_C"/>
</dbReference>
<dbReference type="InterPro" id="IPR017872">
    <property type="entry name" value="Pyrmidine_PPase_CS"/>
</dbReference>
<dbReference type="InterPro" id="IPR013466">
    <property type="entry name" value="Thymidine/AMP_Pase"/>
</dbReference>
<dbReference type="InterPro" id="IPR000053">
    <property type="entry name" value="Thymidine/pyrmidine_PPase"/>
</dbReference>
<dbReference type="NCBIfam" id="TIGR03327">
    <property type="entry name" value="AMP_phos"/>
    <property type="match status" value="1"/>
</dbReference>
<dbReference type="NCBIfam" id="TIGR02645">
    <property type="entry name" value="ARCH_P_rylase"/>
    <property type="match status" value="1"/>
</dbReference>
<dbReference type="NCBIfam" id="NF003338">
    <property type="entry name" value="PRK04350.1"/>
    <property type="match status" value="1"/>
</dbReference>
<dbReference type="PANTHER" id="PTHR10515">
    <property type="entry name" value="THYMIDINE PHOSPHORYLASE"/>
    <property type="match status" value="1"/>
</dbReference>
<dbReference type="PANTHER" id="PTHR10515:SF0">
    <property type="entry name" value="THYMIDINE PHOSPHORYLASE"/>
    <property type="match status" value="1"/>
</dbReference>
<dbReference type="Pfam" id="PF02885">
    <property type="entry name" value="Glycos_trans_3N"/>
    <property type="match status" value="1"/>
</dbReference>
<dbReference type="Pfam" id="PF00591">
    <property type="entry name" value="Glycos_transf_3"/>
    <property type="match status" value="1"/>
</dbReference>
<dbReference type="Pfam" id="PF07831">
    <property type="entry name" value="PYNP_C"/>
    <property type="match status" value="1"/>
</dbReference>
<dbReference type="PIRSF" id="PIRSF000478">
    <property type="entry name" value="TP_PyNP"/>
    <property type="match status" value="1"/>
</dbReference>
<dbReference type="SMART" id="SM00941">
    <property type="entry name" value="PYNP_C"/>
    <property type="match status" value="1"/>
</dbReference>
<dbReference type="SUPFAM" id="SSF52418">
    <property type="entry name" value="Nucleoside phosphorylase/phosphoribosyltransferase catalytic domain"/>
    <property type="match status" value="1"/>
</dbReference>
<dbReference type="SUPFAM" id="SSF47648">
    <property type="entry name" value="Nucleoside phosphorylase/phosphoribosyltransferase N-terminal domain"/>
    <property type="match status" value="1"/>
</dbReference>
<dbReference type="SUPFAM" id="SSF54680">
    <property type="entry name" value="Pyrimidine nucleoside phosphorylase C-terminal domain"/>
    <property type="match status" value="1"/>
</dbReference>
<dbReference type="PROSITE" id="PS00647">
    <property type="entry name" value="THYMID_PHOSPHORYLASE"/>
    <property type="match status" value="1"/>
</dbReference>
<feature type="chain" id="PRO_0000059093" description="AMP phosphorylase">
    <location>
        <begin position="1"/>
        <end position="503"/>
    </location>
</feature>
<feature type="active site" description="Proton donor" evidence="6">
    <location>
        <position position="256"/>
    </location>
</feature>
<feature type="binding site" evidence="4">
    <location>
        <position position="168"/>
    </location>
    <ligand>
        <name>AMP</name>
        <dbReference type="ChEBI" id="CHEBI:456215"/>
    </ligand>
</feature>
<feature type="binding site" evidence="4">
    <location>
        <begin position="194"/>
        <end position="199"/>
    </location>
    <ligand>
        <name>AMP</name>
        <dbReference type="ChEBI" id="CHEBI:456215"/>
    </ligand>
</feature>
<feature type="binding site" evidence="4">
    <location>
        <position position="203"/>
    </location>
    <ligand>
        <name>AMP</name>
        <dbReference type="ChEBI" id="CHEBI:456215"/>
    </ligand>
</feature>
<feature type="binding site" evidence="4">
    <location>
        <position position="264"/>
    </location>
    <ligand>
        <name>AMP</name>
        <dbReference type="ChEBI" id="CHEBI:456215"/>
    </ligand>
</feature>
<feature type="binding site" evidence="4">
    <location>
        <position position="288"/>
    </location>
    <ligand>
        <name>AMP</name>
        <dbReference type="ChEBI" id="CHEBI:456215"/>
    </ligand>
</feature>
<feature type="mutagenesis site" description="Almost complete loss of activity." evidence="4">
    <original>D</original>
    <variation>N</variation>
    <variation>A</variation>
    <location>
        <position position="256"/>
    </location>
</feature>
<feature type="mutagenesis site" description="Almost complete loss of activity." evidence="4">
    <original>K</original>
    <variation>A</variation>
    <location>
        <position position="288"/>
    </location>
</feature>
<feature type="strand" evidence="8">
    <location>
        <begin position="2"/>
        <end position="8"/>
    </location>
</feature>
<feature type="strand" evidence="8">
    <location>
        <begin position="16"/>
        <end position="19"/>
    </location>
</feature>
<feature type="helix" evidence="8">
    <location>
        <begin position="21"/>
        <end position="27"/>
    </location>
</feature>
<feature type="strand" evidence="8">
    <location>
        <begin position="34"/>
        <end position="41"/>
    </location>
</feature>
<feature type="strand" evidence="8">
    <location>
        <begin position="43"/>
        <end position="51"/>
    </location>
</feature>
<feature type="strand" evidence="8">
    <location>
        <begin position="58"/>
        <end position="62"/>
    </location>
</feature>
<feature type="helix" evidence="8">
    <location>
        <begin position="63"/>
        <end position="66"/>
    </location>
</feature>
<feature type="strand" evidence="8">
    <location>
        <begin position="76"/>
        <end position="81"/>
    </location>
</feature>
<feature type="helix" evidence="8">
    <location>
        <begin position="87"/>
        <end position="95"/>
    </location>
</feature>
<feature type="helix" evidence="8">
    <location>
        <begin position="102"/>
        <end position="113"/>
    </location>
</feature>
<feature type="helix" evidence="8">
    <location>
        <begin position="119"/>
        <end position="132"/>
    </location>
</feature>
<feature type="helix" evidence="8">
    <location>
        <begin position="136"/>
        <end position="148"/>
    </location>
</feature>
<feature type="strand" evidence="8">
    <location>
        <begin position="159"/>
        <end position="165"/>
    </location>
</feature>
<feature type="helix" evidence="8">
    <location>
        <begin position="174"/>
        <end position="184"/>
    </location>
</feature>
<feature type="strand" evidence="8">
    <location>
        <begin position="188"/>
        <end position="193"/>
    </location>
</feature>
<feature type="strand" evidence="8">
    <location>
        <begin position="197"/>
        <end position="200"/>
    </location>
</feature>
<feature type="helix" evidence="8">
    <location>
        <begin position="203"/>
        <end position="207"/>
    </location>
</feature>
<feature type="turn" evidence="8">
    <location>
        <begin position="208"/>
        <end position="210"/>
    </location>
</feature>
<feature type="helix" evidence="8">
    <location>
        <begin position="217"/>
        <end position="227"/>
    </location>
</feature>
<feature type="strand" evidence="8">
    <location>
        <begin position="228"/>
        <end position="234"/>
    </location>
</feature>
<feature type="strand" evidence="8">
    <location>
        <begin position="237"/>
        <end position="240"/>
    </location>
</feature>
<feature type="helix" evidence="8">
    <location>
        <begin position="241"/>
        <end position="253"/>
    </location>
</feature>
<feature type="helix" evidence="8">
    <location>
        <begin position="258"/>
        <end position="272"/>
    </location>
</feature>
<feature type="strand" evidence="8">
    <location>
        <begin position="276"/>
        <end position="284"/>
    </location>
</feature>
<feature type="strand" evidence="8">
    <location>
        <begin position="287"/>
        <end position="289"/>
    </location>
</feature>
<feature type="helix" evidence="8">
    <location>
        <begin position="292"/>
        <end position="308"/>
    </location>
</feature>
<feature type="strand" evidence="8">
    <location>
        <begin position="312"/>
        <end position="319"/>
    </location>
</feature>
<feature type="strand" evidence="8">
    <location>
        <begin position="327"/>
        <end position="329"/>
    </location>
</feature>
<feature type="helix" evidence="8">
    <location>
        <begin position="330"/>
        <end position="343"/>
    </location>
</feature>
<feature type="helix" evidence="8">
    <location>
        <begin position="348"/>
        <end position="364"/>
    </location>
</feature>
<feature type="helix" evidence="8">
    <location>
        <begin position="373"/>
        <end position="382"/>
    </location>
</feature>
<feature type="helix" evidence="8">
    <location>
        <begin position="385"/>
        <end position="396"/>
    </location>
</feature>
<feature type="helix" evidence="8">
    <location>
        <begin position="405"/>
        <end position="407"/>
    </location>
</feature>
<feature type="strand" evidence="8">
    <location>
        <begin position="412"/>
        <end position="418"/>
    </location>
</feature>
<feature type="strand" evidence="8">
    <location>
        <begin position="420"/>
        <end position="428"/>
    </location>
</feature>
<feature type="helix" evidence="8">
    <location>
        <begin position="430"/>
        <end position="439"/>
    </location>
</feature>
<feature type="turn" evidence="8">
    <location>
        <begin position="440"/>
        <end position="444"/>
    </location>
</feature>
<feature type="strand" evidence="7">
    <location>
        <begin position="445"/>
        <end position="447"/>
    </location>
</feature>
<feature type="strand" evidence="8">
    <location>
        <begin position="449"/>
        <end position="452"/>
    </location>
</feature>
<feature type="strand" evidence="8">
    <location>
        <begin position="465"/>
        <end position="473"/>
    </location>
</feature>
<feature type="helix" evidence="8">
    <location>
        <begin position="474"/>
        <end position="487"/>
    </location>
</feature>
<feature type="strand" evidence="8">
    <location>
        <begin position="490"/>
        <end position="493"/>
    </location>
</feature>
<reference key="1">
    <citation type="journal article" date="2005" name="Genome Res.">
        <title>Complete genome sequence of the hyperthermophilic archaeon Thermococcus kodakaraensis KOD1 and comparison with Pyrococcus genomes.</title>
        <authorList>
            <person name="Fukui T."/>
            <person name="Atomi H."/>
            <person name="Kanai T."/>
            <person name="Matsumi R."/>
            <person name="Fujiwara S."/>
            <person name="Imanaka T."/>
        </authorList>
    </citation>
    <scope>NUCLEOTIDE SEQUENCE [LARGE SCALE GENOMIC DNA]</scope>
    <source>
        <strain>ATCC BAA-918 / JCM 12380 / KOD1</strain>
    </source>
</reference>
<reference key="2">
    <citation type="journal article" date="2007" name="Science">
        <title>Archaeal type III RuBisCOs function in a pathway for AMP metabolism.</title>
        <authorList>
            <person name="Sato T."/>
            <person name="Atomi H."/>
            <person name="Imanaka T."/>
        </authorList>
    </citation>
    <scope>FUNCTION</scope>
    <scope>CATALYTIC ACTIVITY</scope>
    <scope>PATHWAY</scope>
    <source>
        <strain>ATCC BAA-918 / JCM 12380 / KOD1</strain>
    </source>
</reference>
<reference key="3">
    <citation type="journal article" date="2012" name="J. Bacteriol.">
        <title>Enzymatic characterization of AMP phosphorylase and ribose-1,5-bisphosphate isomerase functioning in an archaeal AMP metabolic pathway.</title>
        <authorList>
            <person name="Aono R."/>
            <person name="Sato T."/>
            <person name="Yano A."/>
            <person name="Yoshida S."/>
            <person name="Nishitani Y."/>
            <person name="Miki K."/>
            <person name="Imanaka T."/>
            <person name="Atomi H."/>
        </authorList>
    </citation>
    <scope>FUNCTION</scope>
    <scope>CATALYTIC ACTIVITY</scope>
    <scope>SUBSTRATE SPECIFICITY</scope>
    <scope>ACTIVITY REGULATION</scope>
    <scope>KINETIC PARAMETERS</scope>
    <scope>INDUCTION</scope>
    <scope>PATHWAY</scope>
    <source>
        <strain>ATCC BAA-918 / JCM 12380 / KOD1</strain>
    </source>
</reference>
<reference key="4">
    <citation type="journal article" date="2013" name="J. Mol. Biol.">
        <title>Structure analysis of archaeal AMP phosphorylase reveals two unique modes of dimerization.</title>
        <authorList>
            <person name="Nishitani Y."/>
            <person name="Aono R."/>
            <person name="Nakamura A."/>
            <person name="Sato T."/>
            <person name="Atomi H."/>
            <person name="Imanaka T."/>
            <person name="Miki K."/>
        </authorList>
    </citation>
    <scope>X-RAY CRYSTALLOGRAPHY (2.21 ANGSTROMS) OF APOENZYME AND IN COMPLEX WITH SUBSTRATE</scope>
    <scope>SUBUNIT</scope>
    <scope>DOMAIN</scope>
    <scope>ACTIVE SITE</scope>
    <scope>MUTAGENESIS OF ASP-256 AND LYS-288</scope>
    <source>
        <strain>ATCC BAA-918 / JCM 12380 / KOD1</strain>
    </source>
</reference>
<keyword id="KW-0002">3D-structure</keyword>
<keyword id="KW-0021">Allosteric enzyme</keyword>
<keyword id="KW-0328">Glycosyltransferase</keyword>
<keyword id="KW-1185">Reference proteome</keyword>
<keyword id="KW-0808">Transferase</keyword>